<gene>
    <name evidence="1" type="primary">xpt</name>
    <name type="ordered locus">Psyr_0076</name>
</gene>
<sequence>MEALHKKIREEGIVLSDQVLKVDAFLNHQIDPALMKEIGDEFARLFADAGVTKIVTIEASGIAPAVMAGLNMGVPVIFARKHQSLTLTENLLTASVYSFTKQVESTVAISPRHLSSDDNVLIIDDFLANGKASQALISIIKQAGATVAGLGIVIEKSFQGGRAELDAQGYRVESLARVESLAGGVVTFK</sequence>
<dbReference type="EC" id="2.4.2.22" evidence="1"/>
<dbReference type="EMBL" id="CP000075">
    <property type="protein sequence ID" value="AAY35150.1"/>
    <property type="molecule type" value="Genomic_DNA"/>
</dbReference>
<dbReference type="RefSeq" id="WP_003401587.1">
    <property type="nucleotide sequence ID" value="NC_007005.1"/>
</dbReference>
<dbReference type="RefSeq" id="YP_233188.1">
    <property type="nucleotide sequence ID" value="NC_007005.1"/>
</dbReference>
<dbReference type="SMR" id="Q500M2"/>
<dbReference type="STRING" id="205918.Psyr_0076"/>
<dbReference type="KEGG" id="psb:Psyr_0076"/>
<dbReference type="PATRIC" id="fig|205918.7.peg.74"/>
<dbReference type="eggNOG" id="COG0503">
    <property type="taxonomic scope" value="Bacteria"/>
</dbReference>
<dbReference type="HOGENOM" id="CLU_099015_0_0_6"/>
<dbReference type="OrthoDB" id="9790678at2"/>
<dbReference type="UniPathway" id="UPA00602">
    <property type="reaction ID" value="UER00658"/>
</dbReference>
<dbReference type="Proteomes" id="UP000000426">
    <property type="component" value="Chromosome"/>
</dbReference>
<dbReference type="GO" id="GO:0005737">
    <property type="term" value="C:cytoplasm"/>
    <property type="evidence" value="ECO:0007669"/>
    <property type="project" value="UniProtKB-SubCell"/>
</dbReference>
<dbReference type="GO" id="GO:0000310">
    <property type="term" value="F:xanthine phosphoribosyltransferase activity"/>
    <property type="evidence" value="ECO:0007669"/>
    <property type="project" value="UniProtKB-UniRule"/>
</dbReference>
<dbReference type="GO" id="GO:0006166">
    <property type="term" value="P:purine ribonucleoside salvage"/>
    <property type="evidence" value="ECO:0007669"/>
    <property type="project" value="UniProtKB-KW"/>
</dbReference>
<dbReference type="GO" id="GO:0046110">
    <property type="term" value="P:xanthine metabolic process"/>
    <property type="evidence" value="ECO:0007669"/>
    <property type="project" value="InterPro"/>
</dbReference>
<dbReference type="GO" id="GO:0032265">
    <property type="term" value="P:XMP salvage"/>
    <property type="evidence" value="ECO:0007669"/>
    <property type="project" value="UniProtKB-UniRule"/>
</dbReference>
<dbReference type="CDD" id="cd06223">
    <property type="entry name" value="PRTases_typeI"/>
    <property type="match status" value="1"/>
</dbReference>
<dbReference type="FunFam" id="3.40.50.2020:FF:000027">
    <property type="entry name" value="Xanthine phosphoribosyltransferase"/>
    <property type="match status" value="1"/>
</dbReference>
<dbReference type="Gene3D" id="3.40.50.2020">
    <property type="match status" value="1"/>
</dbReference>
<dbReference type="HAMAP" id="MF_01184">
    <property type="entry name" value="XPRTase"/>
    <property type="match status" value="1"/>
</dbReference>
<dbReference type="InterPro" id="IPR000836">
    <property type="entry name" value="PRibTrfase_dom"/>
</dbReference>
<dbReference type="InterPro" id="IPR029057">
    <property type="entry name" value="PRTase-like"/>
</dbReference>
<dbReference type="InterPro" id="IPR050118">
    <property type="entry name" value="Pur/Pyrimidine_PRTase"/>
</dbReference>
<dbReference type="InterPro" id="IPR010079">
    <property type="entry name" value="Xanthine_PRibTrfase"/>
</dbReference>
<dbReference type="NCBIfam" id="NF006671">
    <property type="entry name" value="PRK09219.1"/>
    <property type="match status" value="1"/>
</dbReference>
<dbReference type="NCBIfam" id="TIGR01744">
    <property type="entry name" value="XPRTase"/>
    <property type="match status" value="1"/>
</dbReference>
<dbReference type="PANTHER" id="PTHR43864">
    <property type="entry name" value="HYPOXANTHINE/GUANINE PHOSPHORIBOSYLTRANSFERASE"/>
    <property type="match status" value="1"/>
</dbReference>
<dbReference type="PANTHER" id="PTHR43864:SF1">
    <property type="entry name" value="XANTHINE PHOSPHORIBOSYLTRANSFERASE"/>
    <property type="match status" value="1"/>
</dbReference>
<dbReference type="Pfam" id="PF00156">
    <property type="entry name" value="Pribosyltran"/>
    <property type="match status" value="1"/>
</dbReference>
<dbReference type="SUPFAM" id="SSF53271">
    <property type="entry name" value="PRTase-like"/>
    <property type="match status" value="1"/>
</dbReference>
<reference key="1">
    <citation type="journal article" date="2005" name="Proc. Natl. Acad. Sci. U.S.A.">
        <title>Comparison of the complete genome sequences of Pseudomonas syringae pv. syringae B728a and pv. tomato DC3000.</title>
        <authorList>
            <person name="Feil H."/>
            <person name="Feil W.S."/>
            <person name="Chain P."/>
            <person name="Larimer F."/>
            <person name="Dibartolo G."/>
            <person name="Copeland A."/>
            <person name="Lykidis A."/>
            <person name="Trong S."/>
            <person name="Nolan M."/>
            <person name="Goltsman E."/>
            <person name="Thiel J."/>
            <person name="Malfatti S."/>
            <person name="Loper J.E."/>
            <person name="Lapidus A."/>
            <person name="Detter J.C."/>
            <person name="Land M."/>
            <person name="Richardson P.M."/>
            <person name="Kyrpides N.C."/>
            <person name="Ivanova N."/>
            <person name="Lindow S.E."/>
        </authorList>
    </citation>
    <scope>NUCLEOTIDE SEQUENCE [LARGE SCALE GENOMIC DNA]</scope>
    <source>
        <strain>B728a</strain>
    </source>
</reference>
<name>XPT_PSEU2</name>
<accession>Q500M2</accession>
<evidence type="ECO:0000255" key="1">
    <source>
        <dbReference type="HAMAP-Rule" id="MF_01184"/>
    </source>
</evidence>
<keyword id="KW-0963">Cytoplasm</keyword>
<keyword id="KW-0328">Glycosyltransferase</keyword>
<keyword id="KW-0660">Purine salvage</keyword>
<keyword id="KW-0808">Transferase</keyword>
<organism>
    <name type="scientific">Pseudomonas syringae pv. syringae (strain B728a)</name>
    <dbReference type="NCBI Taxonomy" id="205918"/>
    <lineage>
        <taxon>Bacteria</taxon>
        <taxon>Pseudomonadati</taxon>
        <taxon>Pseudomonadota</taxon>
        <taxon>Gammaproteobacteria</taxon>
        <taxon>Pseudomonadales</taxon>
        <taxon>Pseudomonadaceae</taxon>
        <taxon>Pseudomonas</taxon>
        <taxon>Pseudomonas syringae</taxon>
    </lineage>
</organism>
<comment type="function">
    <text evidence="1">Converts the preformed base xanthine, a product of nucleic acid breakdown, to xanthosine 5'-monophosphate (XMP), so it can be reused for RNA or DNA synthesis.</text>
</comment>
<comment type="catalytic activity">
    <reaction evidence="1">
        <text>XMP + diphosphate = xanthine + 5-phospho-alpha-D-ribose 1-diphosphate</text>
        <dbReference type="Rhea" id="RHEA:10800"/>
        <dbReference type="ChEBI" id="CHEBI:17712"/>
        <dbReference type="ChEBI" id="CHEBI:33019"/>
        <dbReference type="ChEBI" id="CHEBI:57464"/>
        <dbReference type="ChEBI" id="CHEBI:58017"/>
        <dbReference type="EC" id="2.4.2.22"/>
    </reaction>
</comment>
<comment type="pathway">
    <text evidence="1">Purine metabolism; XMP biosynthesis via salvage pathway; XMP from xanthine: step 1/1.</text>
</comment>
<comment type="subunit">
    <text evidence="1">Homodimer.</text>
</comment>
<comment type="subcellular location">
    <subcellularLocation>
        <location evidence="1">Cytoplasm</location>
    </subcellularLocation>
</comment>
<comment type="similarity">
    <text evidence="1">Belongs to the purine/pyrimidine phosphoribosyltransferase family. Xpt subfamily.</text>
</comment>
<feature type="chain" id="PRO_0000339739" description="Xanthine phosphoribosyltransferase">
    <location>
        <begin position="1"/>
        <end position="189"/>
    </location>
</feature>
<feature type="binding site" evidence="1">
    <location>
        <position position="20"/>
    </location>
    <ligand>
        <name>xanthine</name>
        <dbReference type="ChEBI" id="CHEBI:17712"/>
    </ligand>
</feature>
<feature type="binding site" evidence="1">
    <location>
        <position position="27"/>
    </location>
    <ligand>
        <name>xanthine</name>
        <dbReference type="ChEBI" id="CHEBI:17712"/>
    </ligand>
</feature>
<feature type="binding site" evidence="1">
    <location>
        <begin position="128"/>
        <end position="132"/>
    </location>
    <ligand>
        <name>5-phospho-alpha-D-ribose 1-diphosphate</name>
        <dbReference type="ChEBI" id="CHEBI:58017"/>
    </ligand>
</feature>
<feature type="binding site" evidence="1">
    <location>
        <position position="156"/>
    </location>
    <ligand>
        <name>xanthine</name>
        <dbReference type="ChEBI" id="CHEBI:17712"/>
    </ligand>
</feature>
<proteinExistence type="inferred from homology"/>
<protein>
    <recommendedName>
        <fullName evidence="1">Xanthine phosphoribosyltransferase</fullName>
        <shortName evidence="1">XPRTase</shortName>
        <ecNumber evidence="1">2.4.2.22</ecNumber>
    </recommendedName>
</protein>